<accession>Q96T66</accession>
<accession>B3KVR6</accession>
<accession>D3DNF2</accession>
<accession>D3DNF3</accession>
<accession>Q8N4G1</accession>
<organism>
    <name type="scientific">Homo sapiens</name>
    <name type="common">Human</name>
    <dbReference type="NCBI Taxonomy" id="9606"/>
    <lineage>
        <taxon>Eukaryota</taxon>
        <taxon>Metazoa</taxon>
        <taxon>Chordata</taxon>
        <taxon>Craniata</taxon>
        <taxon>Vertebrata</taxon>
        <taxon>Euteleostomi</taxon>
        <taxon>Mammalia</taxon>
        <taxon>Eutheria</taxon>
        <taxon>Euarchontoglires</taxon>
        <taxon>Primates</taxon>
        <taxon>Haplorrhini</taxon>
        <taxon>Catarrhini</taxon>
        <taxon>Hominidae</taxon>
        <taxon>Homo</taxon>
    </lineage>
</organism>
<gene>
    <name evidence="12" type="primary">NMNAT3</name>
    <name type="ORF">FKSG76</name>
</gene>
<protein>
    <recommendedName>
        <fullName evidence="9">Nicotinamide/nicotinic acid mononucleotide adenylyltransferase 3</fullName>
        <shortName>NMN/NaMN adenylyltransferase 3</shortName>
    </recommendedName>
    <alternativeName>
        <fullName>Nicotinamide-nucleotide adenylyltransferase 3</fullName>
        <shortName>NMN adenylyltransferase 3</shortName>
    </alternativeName>
    <alternativeName>
        <fullName>Nicotinate-nucleotide adenylyltransferase 3</fullName>
        <shortName>NaMN adenylyltransferase 3</shortName>
        <ecNumber evidence="3 4">2.7.7.18</ecNumber>
    </alternativeName>
    <alternativeName>
        <fullName>Pyridine nucleotide adenylyltransferase 3</fullName>
        <shortName>PNAT-3</shortName>
        <ecNumber evidence="3 4 6">2.7.7.1</ecNumber>
    </alternativeName>
</protein>
<reference key="1">
    <citation type="submission" date="2001-02" db="EMBL/GenBank/DDBJ databases">
        <title>Identification of FKSG76, a novel gene encoding a NMN adenylyltransferase.</title>
        <authorList>
            <person name="Wang Y.-G."/>
            <person name="Gong L."/>
        </authorList>
    </citation>
    <scope>NUCLEOTIDE SEQUENCE [MRNA] (ISOFORM 1)</scope>
</reference>
<reference key="2">
    <citation type="journal article" date="2004" name="Nat. Genet.">
        <title>Complete sequencing and characterization of 21,243 full-length human cDNAs.</title>
        <authorList>
            <person name="Ota T."/>
            <person name="Suzuki Y."/>
            <person name="Nishikawa T."/>
            <person name="Otsuki T."/>
            <person name="Sugiyama T."/>
            <person name="Irie R."/>
            <person name="Wakamatsu A."/>
            <person name="Hayashi K."/>
            <person name="Sato H."/>
            <person name="Nagai K."/>
            <person name="Kimura K."/>
            <person name="Makita H."/>
            <person name="Sekine M."/>
            <person name="Obayashi M."/>
            <person name="Nishi T."/>
            <person name="Shibahara T."/>
            <person name="Tanaka T."/>
            <person name="Ishii S."/>
            <person name="Yamamoto J."/>
            <person name="Saito K."/>
            <person name="Kawai Y."/>
            <person name="Isono Y."/>
            <person name="Nakamura Y."/>
            <person name="Nagahari K."/>
            <person name="Murakami K."/>
            <person name="Yasuda T."/>
            <person name="Iwayanagi T."/>
            <person name="Wagatsuma M."/>
            <person name="Shiratori A."/>
            <person name="Sudo H."/>
            <person name="Hosoiri T."/>
            <person name="Kaku Y."/>
            <person name="Kodaira H."/>
            <person name="Kondo H."/>
            <person name="Sugawara M."/>
            <person name="Takahashi M."/>
            <person name="Kanda K."/>
            <person name="Yokoi T."/>
            <person name="Furuya T."/>
            <person name="Kikkawa E."/>
            <person name="Omura Y."/>
            <person name="Abe K."/>
            <person name="Kamihara K."/>
            <person name="Katsuta N."/>
            <person name="Sato K."/>
            <person name="Tanikawa M."/>
            <person name="Yamazaki M."/>
            <person name="Ninomiya K."/>
            <person name="Ishibashi T."/>
            <person name="Yamashita H."/>
            <person name="Murakawa K."/>
            <person name="Fujimori K."/>
            <person name="Tanai H."/>
            <person name="Kimata M."/>
            <person name="Watanabe M."/>
            <person name="Hiraoka S."/>
            <person name="Chiba Y."/>
            <person name="Ishida S."/>
            <person name="Ono Y."/>
            <person name="Takiguchi S."/>
            <person name="Watanabe S."/>
            <person name="Yosida M."/>
            <person name="Hotuta T."/>
            <person name="Kusano J."/>
            <person name="Kanehori K."/>
            <person name="Takahashi-Fujii A."/>
            <person name="Hara H."/>
            <person name="Tanase T.-O."/>
            <person name="Nomura Y."/>
            <person name="Togiya S."/>
            <person name="Komai F."/>
            <person name="Hara R."/>
            <person name="Takeuchi K."/>
            <person name="Arita M."/>
            <person name="Imose N."/>
            <person name="Musashino K."/>
            <person name="Yuuki H."/>
            <person name="Oshima A."/>
            <person name="Sasaki N."/>
            <person name="Aotsuka S."/>
            <person name="Yoshikawa Y."/>
            <person name="Matsunawa H."/>
            <person name="Ichihara T."/>
            <person name="Shiohata N."/>
            <person name="Sano S."/>
            <person name="Moriya S."/>
            <person name="Momiyama H."/>
            <person name="Satoh N."/>
            <person name="Takami S."/>
            <person name="Terashima Y."/>
            <person name="Suzuki O."/>
            <person name="Nakagawa S."/>
            <person name="Senoh A."/>
            <person name="Mizoguchi H."/>
            <person name="Goto Y."/>
            <person name="Shimizu F."/>
            <person name="Wakebe H."/>
            <person name="Hishigaki H."/>
            <person name="Watanabe T."/>
            <person name="Sugiyama A."/>
            <person name="Takemoto M."/>
            <person name="Kawakami B."/>
            <person name="Yamazaki M."/>
            <person name="Watanabe K."/>
            <person name="Kumagai A."/>
            <person name="Itakura S."/>
            <person name="Fukuzumi Y."/>
            <person name="Fujimori Y."/>
            <person name="Komiyama M."/>
            <person name="Tashiro H."/>
            <person name="Tanigami A."/>
            <person name="Fujiwara T."/>
            <person name="Ono T."/>
            <person name="Yamada K."/>
            <person name="Fujii Y."/>
            <person name="Ozaki K."/>
            <person name="Hirao M."/>
            <person name="Ohmori Y."/>
            <person name="Kawabata A."/>
            <person name="Hikiji T."/>
            <person name="Kobatake N."/>
            <person name="Inagaki H."/>
            <person name="Ikema Y."/>
            <person name="Okamoto S."/>
            <person name="Okitani R."/>
            <person name="Kawakami T."/>
            <person name="Noguchi S."/>
            <person name="Itoh T."/>
            <person name="Shigeta K."/>
            <person name="Senba T."/>
            <person name="Matsumura K."/>
            <person name="Nakajima Y."/>
            <person name="Mizuno T."/>
            <person name="Morinaga M."/>
            <person name="Sasaki M."/>
            <person name="Togashi T."/>
            <person name="Oyama M."/>
            <person name="Hata H."/>
            <person name="Watanabe M."/>
            <person name="Komatsu T."/>
            <person name="Mizushima-Sugano J."/>
            <person name="Satoh T."/>
            <person name="Shirai Y."/>
            <person name="Takahashi Y."/>
            <person name="Nakagawa K."/>
            <person name="Okumura K."/>
            <person name="Nagase T."/>
            <person name="Nomura N."/>
            <person name="Kikuchi H."/>
            <person name="Masuho Y."/>
            <person name="Yamashita R."/>
            <person name="Nakai K."/>
            <person name="Yada T."/>
            <person name="Nakamura Y."/>
            <person name="Ohara O."/>
            <person name="Isogai T."/>
            <person name="Sugano S."/>
        </authorList>
    </citation>
    <scope>NUCLEOTIDE SEQUENCE [LARGE SCALE MRNA] (ISOFORM 3)</scope>
    <source>
        <tissue>Brain cortex</tissue>
    </source>
</reference>
<reference key="3">
    <citation type="journal article" date="2006" name="Nature">
        <title>The DNA sequence, annotation and analysis of human chromosome 3.</title>
        <authorList>
            <person name="Muzny D.M."/>
            <person name="Scherer S.E."/>
            <person name="Kaul R."/>
            <person name="Wang J."/>
            <person name="Yu J."/>
            <person name="Sudbrak R."/>
            <person name="Buhay C.J."/>
            <person name="Chen R."/>
            <person name="Cree A."/>
            <person name="Ding Y."/>
            <person name="Dugan-Rocha S."/>
            <person name="Gill R."/>
            <person name="Gunaratne P."/>
            <person name="Harris R.A."/>
            <person name="Hawes A.C."/>
            <person name="Hernandez J."/>
            <person name="Hodgson A.V."/>
            <person name="Hume J."/>
            <person name="Jackson A."/>
            <person name="Khan Z.M."/>
            <person name="Kovar-Smith C."/>
            <person name="Lewis L.R."/>
            <person name="Lozado R.J."/>
            <person name="Metzker M.L."/>
            <person name="Milosavljevic A."/>
            <person name="Miner G.R."/>
            <person name="Morgan M.B."/>
            <person name="Nazareth L.V."/>
            <person name="Scott G."/>
            <person name="Sodergren E."/>
            <person name="Song X.-Z."/>
            <person name="Steffen D."/>
            <person name="Wei S."/>
            <person name="Wheeler D.A."/>
            <person name="Wright M.W."/>
            <person name="Worley K.C."/>
            <person name="Yuan Y."/>
            <person name="Zhang Z."/>
            <person name="Adams C.Q."/>
            <person name="Ansari-Lari M.A."/>
            <person name="Ayele M."/>
            <person name="Brown M.J."/>
            <person name="Chen G."/>
            <person name="Chen Z."/>
            <person name="Clendenning J."/>
            <person name="Clerc-Blankenburg K.P."/>
            <person name="Chen R."/>
            <person name="Chen Z."/>
            <person name="Davis C."/>
            <person name="Delgado O."/>
            <person name="Dinh H.H."/>
            <person name="Dong W."/>
            <person name="Draper H."/>
            <person name="Ernst S."/>
            <person name="Fu G."/>
            <person name="Gonzalez-Garay M.L."/>
            <person name="Garcia D.K."/>
            <person name="Gillett W."/>
            <person name="Gu J."/>
            <person name="Hao B."/>
            <person name="Haugen E."/>
            <person name="Havlak P."/>
            <person name="He X."/>
            <person name="Hennig S."/>
            <person name="Hu S."/>
            <person name="Huang W."/>
            <person name="Jackson L.R."/>
            <person name="Jacob L.S."/>
            <person name="Kelly S.H."/>
            <person name="Kube M."/>
            <person name="Levy R."/>
            <person name="Li Z."/>
            <person name="Liu B."/>
            <person name="Liu J."/>
            <person name="Liu W."/>
            <person name="Lu J."/>
            <person name="Maheshwari M."/>
            <person name="Nguyen B.-V."/>
            <person name="Okwuonu G.O."/>
            <person name="Palmeiri A."/>
            <person name="Pasternak S."/>
            <person name="Perez L.M."/>
            <person name="Phelps K.A."/>
            <person name="Plopper F.J."/>
            <person name="Qiang B."/>
            <person name="Raymond C."/>
            <person name="Rodriguez R."/>
            <person name="Saenphimmachak C."/>
            <person name="Santibanez J."/>
            <person name="Shen H."/>
            <person name="Shen Y."/>
            <person name="Subramanian S."/>
            <person name="Tabor P.E."/>
            <person name="Verduzco D."/>
            <person name="Waldron L."/>
            <person name="Wang J."/>
            <person name="Wang J."/>
            <person name="Wang Q."/>
            <person name="Williams G.A."/>
            <person name="Wong G.K.-S."/>
            <person name="Yao Z."/>
            <person name="Zhang J."/>
            <person name="Zhang X."/>
            <person name="Zhao G."/>
            <person name="Zhou J."/>
            <person name="Zhou Y."/>
            <person name="Nelson D."/>
            <person name="Lehrach H."/>
            <person name="Reinhardt R."/>
            <person name="Naylor S.L."/>
            <person name="Yang H."/>
            <person name="Olson M."/>
            <person name="Weinstock G."/>
            <person name="Gibbs R.A."/>
        </authorList>
    </citation>
    <scope>NUCLEOTIDE SEQUENCE [LARGE SCALE GENOMIC DNA]</scope>
</reference>
<reference key="4">
    <citation type="submission" date="2005-09" db="EMBL/GenBank/DDBJ databases">
        <authorList>
            <person name="Mural R.J."/>
            <person name="Istrail S."/>
            <person name="Sutton G.G."/>
            <person name="Florea L."/>
            <person name="Halpern A.L."/>
            <person name="Mobarry C.M."/>
            <person name="Lippert R."/>
            <person name="Walenz B."/>
            <person name="Shatkay H."/>
            <person name="Dew I."/>
            <person name="Miller J.R."/>
            <person name="Flanigan M.J."/>
            <person name="Edwards N.J."/>
            <person name="Bolanos R."/>
            <person name="Fasulo D."/>
            <person name="Halldorsson B.V."/>
            <person name="Hannenhalli S."/>
            <person name="Turner R."/>
            <person name="Yooseph S."/>
            <person name="Lu F."/>
            <person name="Nusskern D.R."/>
            <person name="Shue B.C."/>
            <person name="Zheng X.H."/>
            <person name="Zhong F."/>
            <person name="Delcher A.L."/>
            <person name="Huson D.H."/>
            <person name="Kravitz S.A."/>
            <person name="Mouchard L."/>
            <person name="Reinert K."/>
            <person name="Remington K.A."/>
            <person name="Clark A.G."/>
            <person name="Waterman M.S."/>
            <person name="Eichler E.E."/>
            <person name="Adams M.D."/>
            <person name="Hunkapiller M.W."/>
            <person name="Myers E.W."/>
            <person name="Venter J.C."/>
        </authorList>
    </citation>
    <scope>NUCLEOTIDE SEQUENCE [LARGE SCALE GENOMIC DNA]</scope>
</reference>
<reference key="5">
    <citation type="journal article" date="2004" name="Genome Res.">
        <title>The status, quality, and expansion of the NIH full-length cDNA project: the Mammalian Gene Collection (MGC).</title>
        <authorList>
            <consortium name="The MGC Project Team"/>
        </authorList>
    </citation>
    <scope>NUCLEOTIDE SEQUENCE [LARGE SCALE MRNA] (ISOFORM 2)</scope>
    <source>
        <tissue>Colon</tissue>
        <tissue>Kidney</tissue>
    </source>
</reference>
<reference key="6">
    <citation type="journal article" date="2005" name="J. Biol. Chem.">
        <title>Subcellular compartmentation and differential catalytic properties of the three human nicotinamide mononucleotide adenylyltransferase isoforms.</title>
        <authorList>
            <person name="Berger F."/>
            <person name="Lau C."/>
            <person name="Dahlmann M."/>
            <person name="Ziegler M."/>
        </authorList>
    </citation>
    <scope>FUNCTION</scope>
    <scope>CATALYTIC ACTIVITY</scope>
    <scope>PATHWAY</scope>
    <scope>BIOPHYSICOCHEMICAL PROPERTIES</scope>
    <scope>SUBSTRATE SPECIFICITY</scope>
    <scope>SUBCELLULAR LOCATION</scope>
    <scope>TISSUE SPECIFICITY</scope>
</reference>
<reference key="7">
    <citation type="journal article" date="2007" name="Biochemistry">
        <title>Initial-rate kinetics of human NMN-adenylyltransferases: substrate and metal ion specificity, inhibition by products and multisubstrate analogues, and isozyme contributions to NAD+ biosynthesis.</title>
        <authorList>
            <person name="Sorci L."/>
            <person name="Cimadamore F."/>
            <person name="Scotti S."/>
            <person name="Petrelli R."/>
            <person name="Cappellacci L."/>
            <person name="Franchetti P."/>
            <person name="Orsomando G."/>
            <person name="Magni G."/>
        </authorList>
    </citation>
    <scope>FUNCTION</scope>
    <scope>CATALYTIC ACTIVITY</scope>
    <scope>PATHWAY</scope>
    <scope>BIOPHYSICOCHEMICAL PROPERTIES</scope>
    <scope>ACTIVITY REGULATION</scope>
    <scope>COFACTOR</scope>
</reference>
<reference key="8">
    <citation type="journal article" date="2008" name="Nature">
        <title>NAD synthase NMNAT acts as a chaperone to protect against neurodegeneration.</title>
        <authorList>
            <person name="Zhai R.G."/>
            <person name="Zhang F."/>
            <person name="Hiesinger P.R."/>
            <person name="Cao Y."/>
            <person name="Haueter C.M."/>
            <person name="Bellen H.J."/>
        </authorList>
    </citation>
    <scope>FUNCTION</scope>
</reference>
<reference key="9">
    <citation type="journal article" date="2015" name="Nat. Commun.">
        <title>Alternative splicing of Drosophila Nmnat functions as a switch to enhance neuroprotection under stress.</title>
        <authorList>
            <person name="Ruan K."/>
            <person name="Zhu Y."/>
            <person name="Li C."/>
            <person name="Brazill J.M."/>
            <person name="Zhai R.G."/>
        </authorList>
    </citation>
    <scope>FUNCTION</scope>
    <scope>CATALYTIC ACTIVITY</scope>
</reference>
<reference key="10">
    <citation type="journal article" date="2015" name="Proteomics">
        <title>N-terminome analysis of the human mitochondrial proteome.</title>
        <authorList>
            <person name="Vaca Jacome A.S."/>
            <person name="Rabilloud T."/>
            <person name="Schaeffer-Reiss C."/>
            <person name="Rompais M."/>
            <person name="Ayoub D."/>
            <person name="Lane L."/>
            <person name="Bairoch A."/>
            <person name="Van Dorsselaer A."/>
            <person name="Carapito C."/>
        </authorList>
    </citation>
    <scope>IDENTIFICATION BY MASS SPECTROMETRY [LARGE SCALE ANALYSIS]</scope>
</reference>
<reference key="11">
    <citation type="journal article" date="2003" name="J. Biol. Chem.">
        <title>Structural characterization of a human cytosolic NMN/NaMN adenylyltransferase and implication in human NAD biosynthesis.</title>
        <authorList>
            <person name="Zhang X."/>
            <person name="Kurnasov O.V."/>
            <person name="Karthikeyan S."/>
            <person name="Grishin N.V."/>
            <person name="Osterman A.L."/>
            <person name="Zhang H."/>
        </authorList>
    </citation>
    <scope>X-RAY CRYSTALLOGRAPHY (1.9 ANGSTROMS) IN COMPLEX WITH NMN; NAD AND ATP ANALOG</scope>
    <scope>SUBCELLULAR LOCATION</scope>
    <scope>SUBUNIT</scope>
    <scope>TISSUE SPECIFICITY</scope>
</reference>
<dbReference type="EC" id="2.7.7.18" evidence="3 4"/>
<dbReference type="EC" id="2.7.7.1" evidence="3 4 6"/>
<dbReference type="EMBL" id="AF345564">
    <property type="protein sequence ID" value="AAK52726.1"/>
    <property type="molecule type" value="mRNA"/>
</dbReference>
<dbReference type="EMBL" id="AK123208">
    <property type="protein sequence ID" value="BAG53878.1"/>
    <property type="molecule type" value="mRNA"/>
</dbReference>
<dbReference type="EMBL" id="AC046134">
    <property type="status" value="NOT_ANNOTATED_CDS"/>
    <property type="molecule type" value="Genomic_DNA"/>
</dbReference>
<dbReference type="EMBL" id="AC110716">
    <property type="status" value="NOT_ANNOTATED_CDS"/>
    <property type="molecule type" value="Genomic_DNA"/>
</dbReference>
<dbReference type="EMBL" id="CH471052">
    <property type="protein sequence ID" value="EAW79023.1"/>
    <property type="molecule type" value="Genomic_DNA"/>
</dbReference>
<dbReference type="EMBL" id="CH471052">
    <property type="protein sequence ID" value="EAW79024.1"/>
    <property type="molecule type" value="Genomic_DNA"/>
</dbReference>
<dbReference type="EMBL" id="CH471052">
    <property type="protein sequence ID" value="EAW79025.1"/>
    <property type="molecule type" value="Genomic_DNA"/>
</dbReference>
<dbReference type="EMBL" id="CH471052">
    <property type="protein sequence ID" value="EAW79030.1"/>
    <property type="molecule type" value="Genomic_DNA"/>
</dbReference>
<dbReference type="EMBL" id="CH471052">
    <property type="protein sequence ID" value="EAW79031.1"/>
    <property type="molecule type" value="Genomic_DNA"/>
</dbReference>
<dbReference type="EMBL" id="BC034374">
    <property type="protein sequence ID" value="AAH34374.1"/>
    <property type="molecule type" value="mRNA"/>
</dbReference>
<dbReference type="CCDS" id="CCDS3111.1">
    <molecule id="Q96T66-2"/>
</dbReference>
<dbReference type="CCDS" id="CCDS56282.1">
    <molecule id="Q96T66-3"/>
</dbReference>
<dbReference type="CCDS" id="CCDS82846.1">
    <molecule id="Q96T66-1"/>
</dbReference>
<dbReference type="RefSeq" id="NP_001186976.1">
    <molecule id="Q96T66-3"/>
    <property type="nucleotide sequence ID" value="NM_001200047.3"/>
</dbReference>
<dbReference type="RefSeq" id="NP_001307440.1">
    <molecule id="Q96T66-1"/>
    <property type="nucleotide sequence ID" value="NM_001320511.2"/>
</dbReference>
<dbReference type="RefSeq" id="NP_001307441.1">
    <molecule id="Q96T66-1"/>
    <property type="nucleotide sequence ID" value="NM_001320512.2"/>
</dbReference>
<dbReference type="RefSeq" id="NP_001388529.1">
    <molecule id="Q96T66-1"/>
    <property type="nucleotide sequence ID" value="NM_001401600.1"/>
</dbReference>
<dbReference type="RefSeq" id="NP_001388530.1">
    <molecule id="Q96T66-1"/>
    <property type="nucleotide sequence ID" value="NM_001401601.1"/>
</dbReference>
<dbReference type="RefSeq" id="NP_001388531.1">
    <molecule id="Q96T66-1"/>
    <property type="nucleotide sequence ID" value="NM_001401602.1"/>
</dbReference>
<dbReference type="RefSeq" id="NP_001388532.1">
    <molecule id="Q96T66-1"/>
    <property type="nucleotide sequence ID" value="NM_001401603.1"/>
</dbReference>
<dbReference type="RefSeq" id="NP_001388533.1">
    <molecule id="Q96T66-2"/>
    <property type="nucleotide sequence ID" value="NM_001401604.1"/>
</dbReference>
<dbReference type="RefSeq" id="NP_835471.1">
    <molecule id="Q96T66-2"/>
    <property type="nucleotide sequence ID" value="NM_178177.5"/>
</dbReference>
<dbReference type="RefSeq" id="XP_011511092.1">
    <property type="nucleotide sequence ID" value="XM_011512790.1"/>
</dbReference>
<dbReference type="RefSeq" id="XP_011511093.1">
    <property type="nucleotide sequence ID" value="XM_011512791.2"/>
</dbReference>
<dbReference type="RefSeq" id="XP_016861824.1">
    <property type="nucleotide sequence ID" value="XM_017006335.1"/>
</dbReference>
<dbReference type="RefSeq" id="XP_016861825.1">
    <property type="nucleotide sequence ID" value="XM_017006336.1"/>
</dbReference>
<dbReference type="RefSeq" id="XP_016861826.1">
    <property type="nucleotide sequence ID" value="XM_017006337.1"/>
</dbReference>
<dbReference type="RefSeq" id="XP_016861827.1">
    <property type="nucleotide sequence ID" value="XM_017006338.1"/>
</dbReference>
<dbReference type="PDB" id="1NUP">
    <property type="method" value="X-ray"/>
    <property type="resolution" value="1.90 A"/>
    <property type="chains" value="A/B=1-252"/>
</dbReference>
<dbReference type="PDB" id="1NUQ">
    <property type="method" value="X-ray"/>
    <property type="resolution" value="1.90 A"/>
    <property type="chains" value="A/B=1-252"/>
</dbReference>
<dbReference type="PDB" id="1NUR">
    <property type="method" value="X-ray"/>
    <property type="resolution" value="2.15 A"/>
    <property type="chains" value="A/B=1-252"/>
</dbReference>
<dbReference type="PDB" id="1NUS">
    <property type="method" value="X-ray"/>
    <property type="resolution" value="2.20 A"/>
    <property type="chains" value="A/B=1-252"/>
</dbReference>
<dbReference type="PDB" id="1NUT">
    <property type="method" value="X-ray"/>
    <property type="resolution" value="1.90 A"/>
    <property type="chains" value="A/B=1-252"/>
</dbReference>
<dbReference type="PDB" id="1NUU">
    <property type="method" value="X-ray"/>
    <property type="resolution" value="1.90 A"/>
    <property type="chains" value="A/B=1-252"/>
</dbReference>
<dbReference type="PDBsum" id="1NUP"/>
<dbReference type="PDBsum" id="1NUQ"/>
<dbReference type="PDBsum" id="1NUR"/>
<dbReference type="PDBsum" id="1NUS"/>
<dbReference type="PDBsum" id="1NUT"/>
<dbReference type="PDBsum" id="1NUU"/>
<dbReference type="SMR" id="Q96T66"/>
<dbReference type="BioGRID" id="131564">
    <property type="interactions" value="9"/>
</dbReference>
<dbReference type="FunCoup" id="Q96T66">
    <property type="interactions" value="1103"/>
</dbReference>
<dbReference type="IntAct" id="Q96T66">
    <property type="interactions" value="5"/>
</dbReference>
<dbReference type="DrugBank" id="DB02596">
    <property type="generic name" value="alpha,beta-Methyleneadenosine 5'-triphosphate"/>
</dbReference>
<dbReference type="DrugBank" id="DB04099">
    <property type="generic name" value="Deamido-Nad"/>
</dbReference>
<dbReference type="DrugBank" id="DB03227">
    <property type="generic name" value="Nicotinamide Mononucleotide"/>
</dbReference>
<dbReference type="iPTMnet" id="Q96T66"/>
<dbReference type="PhosphoSitePlus" id="Q96T66"/>
<dbReference type="BioMuta" id="NMNAT3"/>
<dbReference type="DMDM" id="116242680"/>
<dbReference type="jPOST" id="Q96T66"/>
<dbReference type="MassIVE" id="Q96T66"/>
<dbReference type="PaxDb" id="9606-ENSP00000340523"/>
<dbReference type="PeptideAtlas" id="Q96T66"/>
<dbReference type="ProteomicsDB" id="78200">
    <molecule id="Q96T66-1"/>
</dbReference>
<dbReference type="ProteomicsDB" id="78201">
    <molecule id="Q96T66-2"/>
</dbReference>
<dbReference type="ProteomicsDB" id="78202">
    <molecule id="Q96T66-3"/>
</dbReference>
<dbReference type="Pumba" id="Q96T66"/>
<dbReference type="Antibodypedia" id="33465">
    <property type="antibodies" value="178 antibodies from 27 providers"/>
</dbReference>
<dbReference type="DNASU" id="349565"/>
<dbReference type="Ensembl" id="ENST00000296202.12">
    <molecule id="Q96T66-1"/>
    <property type="protein sequence ID" value="ENSP00000296202.6"/>
    <property type="gene ID" value="ENSG00000163864.18"/>
</dbReference>
<dbReference type="Ensembl" id="ENST00000339837.9">
    <molecule id="Q96T66-2"/>
    <property type="protein sequence ID" value="ENSP00000340523.5"/>
    <property type="gene ID" value="ENSG00000163864.18"/>
</dbReference>
<dbReference type="Ensembl" id="ENST00000413939.6">
    <molecule id="Q96T66-3"/>
    <property type="protein sequence ID" value="ENSP00000412953.2"/>
    <property type="gene ID" value="ENSG00000163864.18"/>
</dbReference>
<dbReference type="Ensembl" id="ENST00000704800.1">
    <molecule id="Q96T66-1"/>
    <property type="protein sequence ID" value="ENSP00000516041.1"/>
    <property type="gene ID" value="ENSG00000163864.18"/>
</dbReference>
<dbReference type="GeneID" id="349565"/>
<dbReference type="KEGG" id="hsa:349565"/>
<dbReference type="MANE-Select" id="ENST00000704800.1">
    <property type="protein sequence ID" value="ENSP00000516041.1"/>
    <property type="RefSeq nucleotide sequence ID" value="NM_001401600.1"/>
    <property type="RefSeq protein sequence ID" value="NP_001388529.1"/>
</dbReference>
<dbReference type="UCSC" id="uc003etj.4">
    <molecule id="Q96T66-1"/>
    <property type="organism name" value="human"/>
</dbReference>
<dbReference type="AGR" id="HGNC:20989"/>
<dbReference type="CTD" id="349565"/>
<dbReference type="DisGeNET" id="349565"/>
<dbReference type="GeneCards" id="NMNAT3"/>
<dbReference type="HGNC" id="HGNC:20989">
    <property type="gene designation" value="NMNAT3"/>
</dbReference>
<dbReference type="HPA" id="ENSG00000163864">
    <property type="expression patterns" value="Low tissue specificity"/>
</dbReference>
<dbReference type="MIM" id="608702">
    <property type="type" value="gene"/>
</dbReference>
<dbReference type="neXtProt" id="NX_Q96T66"/>
<dbReference type="OpenTargets" id="ENSG00000163864"/>
<dbReference type="PharmGKB" id="PA134952303"/>
<dbReference type="VEuPathDB" id="HostDB:ENSG00000163864"/>
<dbReference type="eggNOG" id="KOG3199">
    <property type="taxonomic scope" value="Eukaryota"/>
</dbReference>
<dbReference type="GeneTree" id="ENSGT00950000183179"/>
<dbReference type="HOGENOM" id="CLU_033366_3_1_1"/>
<dbReference type="InParanoid" id="Q96T66"/>
<dbReference type="OrthoDB" id="422187at2759"/>
<dbReference type="PAN-GO" id="Q96T66">
    <property type="GO annotations" value="5 GO annotations based on evolutionary models"/>
</dbReference>
<dbReference type="PhylomeDB" id="Q96T66"/>
<dbReference type="TreeFam" id="TF315035"/>
<dbReference type="BioCyc" id="MetaCyc:HS08953-MONOMER"/>
<dbReference type="BRENDA" id="2.7.7.1">
    <property type="organism ID" value="2681"/>
</dbReference>
<dbReference type="BRENDA" id="2.7.7.18">
    <property type="organism ID" value="2681"/>
</dbReference>
<dbReference type="PathwayCommons" id="Q96T66"/>
<dbReference type="Reactome" id="R-HSA-196807">
    <property type="pathway name" value="Nicotinate metabolism"/>
</dbReference>
<dbReference type="SABIO-RK" id="Q96T66"/>
<dbReference type="SignaLink" id="Q96T66"/>
<dbReference type="UniPathway" id="UPA00253">
    <property type="reaction ID" value="UER00332"/>
</dbReference>
<dbReference type="UniPathway" id="UPA00253">
    <property type="reaction ID" value="UER00600"/>
</dbReference>
<dbReference type="BioGRID-ORCS" id="349565">
    <property type="hits" value="10 hits in 1157 CRISPR screens"/>
</dbReference>
<dbReference type="ChiTaRS" id="NMNAT3">
    <property type="organism name" value="human"/>
</dbReference>
<dbReference type="EvolutionaryTrace" id="Q96T66"/>
<dbReference type="GenomeRNAi" id="349565"/>
<dbReference type="Pharos" id="Q96T66">
    <property type="development level" value="Tbio"/>
</dbReference>
<dbReference type="PRO" id="PR:Q96T66"/>
<dbReference type="Proteomes" id="UP000005640">
    <property type="component" value="Chromosome 3"/>
</dbReference>
<dbReference type="RNAct" id="Q96T66">
    <property type="molecule type" value="protein"/>
</dbReference>
<dbReference type="Bgee" id="ENSG00000163864">
    <property type="expression patterns" value="Expressed in male germ line stem cell (sensu Vertebrata) in testis and 162 other cell types or tissues"/>
</dbReference>
<dbReference type="ExpressionAtlas" id="Q96T66">
    <property type="expression patterns" value="baseline and differential"/>
</dbReference>
<dbReference type="GO" id="GO:0030424">
    <property type="term" value="C:axon"/>
    <property type="evidence" value="ECO:0007669"/>
    <property type="project" value="Ensembl"/>
</dbReference>
<dbReference type="GO" id="GO:0005759">
    <property type="term" value="C:mitochondrial matrix"/>
    <property type="evidence" value="ECO:0000304"/>
    <property type="project" value="Reactome"/>
</dbReference>
<dbReference type="GO" id="GO:0005739">
    <property type="term" value="C:mitochondrion"/>
    <property type="evidence" value="ECO:0000314"/>
    <property type="project" value="HPA"/>
</dbReference>
<dbReference type="GO" id="GO:0043025">
    <property type="term" value="C:neuronal cell body"/>
    <property type="evidence" value="ECO:0007669"/>
    <property type="project" value="Ensembl"/>
</dbReference>
<dbReference type="GO" id="GO:0005524">
    <property type="term" value="F:ATP binding"/>
    <property type="evidence" value="ECO:0007669"/>
    <property type="project" value="UniProtKB-KW"/>
</dbReference>
<dbReference type="GO" id="GO:0000309">
    <property type="term" value="F:nicotinamide-nucleotide adenylyltransferase activity"/>
    <property type="evidence" value="ECO:0000318"/>
    <property type="project" value="GO_Central"/>
</dbReference>
<dbReference type="GO" id="GO:0004515">
    <property type="term" value="F:nicotinate-nucleotide adenylyltransferase activity"/>
    <property type="evidence" value="ECO:0000314"/>
    <property type="project" value="UniProtKB"/>
</dbReference>
<dbReference type="GO" id="GO:0009435">
    <property type="term" value="P:NAD biosynthetic process"/>
    <property type="evidence" value="ECO:0000318"/>
    <property type="project" value="GO_Central"/>
</dbReference>
<dbReference type="GO" id="GO:1990535">
    <property type="term" value="P:neuron projection maintenance"/>
    <property type="evidence" value="ECO:0007669"/>
    <property type="project" value="Ensembl"/>
</dbReference>
<dbReference type="GO" id="GO:0009165">
    <property type="term" value="P:nucleotide biosynthetic process"/>
    <property type="evidence" value="ECO:0000305"/>
    <property type="project" value="UniProtKB"/>
</dbReference>
<dbReference type="GO" id="GO:0034612">
    <property type="term" value="P:response to tumor necrosis factor"/>
    <property type="evidence" value="ECO:0007669"/>
    <property type="project" value="Ensembl"/>
</dbReference>
<dbReference type="GO" id="GO:0009611">
    <property type="term" value="P:response to wounding"/>
    <property type="evidence" value="ECO:0007669"/>
    <property type="project" value="Ensembl"/>
</dbReference>
<dbReference type="CDD" id="cd09286">
    <property type="entry name" value="NMNAT_Eukarya"/>
    <property type="match status" value="1"/>
</dbReference>
<dbReference type="FunFam" id="3.40.50.620:FF:000221">
    <property type="entry name" value="Nicotinamide/nicotinic acid mononucleotide adenylyltransferase 3"/>
    <property type="match status" value="1"/>
</dbReference>
<dbReference type="Gene3D" id="3.40.50.620">
    <property type="entry name" value="HUPs"/>
    <property type="match status" value="1"/>
</dbReference>
<dbReference type="InterPro" id="IPR004821">
    <property type="entry name" value="Cyt_trans-like"/>
</dbReference>
<dbReference type="InterPro" id="IPR051182">
    <property type="entry name" value="Euk_NMN_adenylyltrnsfrase"/>
</dbReference>
<dbReference type="InterPro" id="IPR005248">
    <property type="entry name" value="NadD/NMNAT"/>
</dbReference>
<dbReference type="InterPro" id="IPR045094">
    <property type="entry name" value="NMNAT_euk"/>
</dbReference>
<dbReference type="InterPro" id="IPR014729">
    <property type="entry name" value="Rossmann-like_a/b/a_fold"/>
</dbReference>
<dbReference type="NCBIfam" id="TIGR00482">
    <property type="entry name" value="nicotinate (nicotinamide) nucleotide adenylyltransferase"/>
    <property type="match status" value="1"/>
</dbReference>
<dbReference type="PANTHER" id="PTHR12039">
    <property type="entry name" value="NICOTINAMIDE MONONUCLEOTIDE ADENYLYLTRANSFERASE"/>
    <property type="match status" value="1"/>
</dbReference>
<dbReference type="PANTHER" id="PTHR12039:SF7">
    <property type="entry name" value="NICOTINAMIDE_NICOTINIC ACID MONONUCLEOTIDE ADENYLYLTRANSFERASE 3"/>
    <property type="match status" value="1"/>
</dbReference>
<dbReference type="Pfam" id="PF01467">
    <property type="entry name" value="CTP_transf_like"/>
    <property type="match status" value="1"/>
</dbReference>
<dbReference type="SUPFAM" id="SSF52374">
    <property type="entry name" value="Nucleotidylyl transferase"/>
    <property type="match status" value="1"/>
</dbReference>
<feature type="chain" id="PRO_0000135016" description="Nicotinamide/nicotinic acid mononucleotide adenylyltransferase 3">
    <location>
        <begin position="1"/>
        <end position="252"/>
    </location>
</feature>
<feature type="binding site" evidence="2 13">
    <location>
        <position position="14"/>
    </location>
    <ligand>
        <name>NAD(+)</name>
        <dbReference type="ChEBI" id="CHEBI:57540"/>
    </ligand>
</feature>
<feature type="binding site" evidence="2 13">
    <location>
        <position position="15"/>
    </location>
    <ligand>
        <name>NAD(+)</name>
        <dbReference type="ChEBI" id="CHEBI:57540"/>
    </ligand>
</feature>
<feature type="binding site" description="in other chain" evidence="2">
    <location>
        <position position="22"/>
    </location>
    <ligand>
        <name>ATP</name>
        <dbReference type="ChEBI" id="CHEBI:30616"/>
        <note>ligand shared between dimeric partners</note>
    </ligand>
</feature>
<feature type="binding site" description="in other chain" evidence="2">
    <location>
        <position position="56"/>
    </location>
    <ligand>
        <name>ATP</name>
        <dbReference type="ChEBI" id="CHEBI:30616"/>
        <note>ligand shared between dimeric partners</note>
    </ligand>
</feature>
<feature type="binding site" evidence="2 13">
    <location>
        <position position="90"/>
    </location>
    <ligand>
        <name>NAD(+)</name>
        <dbReference type="ChEBI" id="CHEBI:57540"/>
    </ligand>
</feature>
<feature type="binding site" evidence="2 13">
    <location>
        <position position="93"/>
    </location>
    <ligand>
        <name>NAD(+)</name>
        <dbReference type="ChEBI" id="CHEBI:57540"/>
    </ligand>
</feature>
<feature type="binding site" evidence="2 13">
    <location>
        <position position="135"/>
    </location>
    <ligand>
        <name>NAD(+)</name>
        <dbReference type="ChEBI" id="CHEBI:57540"/>
    </ligand>
</feature>
<feature type="binding site" evidence="2 13">
    <location>
        <position position="137"/>
    </location>
    <ligand>
        <name>NAD(+)</name>
        <dbReference type="ChEBI" id="CHEBI:57540"/>
    </ligand>
</feature>
<feature type="binding site" evidence="2">
    <location>
        <position position="140"/>
    </location>
    <ligand>
        <name>ATP</name>
        <dbReference type="ChEBI" id="CHEBI:30616"/>
        <note>ligand shared between dimeric partners</note>
    </ligand>
</feature>
<feature type="binding site" evidence="2 13">
    <location>
        <position position="147"/>
    </location>
    <ligand>
        <name>NAD(+)</name>
        <dbReference type="ChEBI" id="CHEBI:57540"/>
    </ligand>
</feature>
<feature type="binding site" evidence="2 13">
    <location>
        <position position="148"/>
    </location>
    <ligand>
        <name>NAD(+)</name>
        <dbReference type="ChEBI" id="CHEBI:57540"/>
    </ligand>
</feature>
<feature type="binding site" evidence="2 13">
    <location>
        <position position="167"/>
    </location>
    <ligand>
        <name>NAD(+)</name>
        <dbReference type="ChEBI" id="CHEBI:57540"/>
    </ligand>
</feature>
<feature type="binding site" evidence="2 13">
    <location>
        <position position="198"/>
    </location>
    <ligand>
        <name>NAD(+)</name>
        <dbReference type="ChEBI" id="CHEBI:57540"/>
    </ligand>
</feature>
<feature type="binding site" description="in other chain" evidence="2">
    <location>
        <begin position="203"/>
        <end position="206"/>
    </location>
    <ligand>
        <name>ATP</name>
        <dbReference type="ChEBI" id="CHEBI:30616"/>
        <note>ligand shared between dimeric partners</note>
    </ligand>
</feature>
<feature type="splice variant" id="VSP_010267" description="In isoform 2." evidence="8">
    <location>
        <begin position="1"/>
        <end position="37"/>
    </location>
</feature>
<feature type="splice variant" id="VSP_043203" description="In isoform 3." evidence="7">
    <location>
        <begin position="37"/>
        <end position="125"/>
    </location>
</feature>
<feature type="sequence conflict" description="In Ref. 1; AAK52726." evidence="9" ref="1">
    <original>G</original>
    <variation>S</variation>
    <location>
        <position position="169"/>
    </location>
</feature>
<feature type="strand" evidence="14">
    <location>
        <begin position="5"/>
        <end position="13"/>
    </location>
</feature>
<feature type="helix" evidence="14">
    <location>
        <begin position="20"/>
        <end position="35"/>
    </location>
</feature>
<feature type="strand" evidence="14">
    <location>
        <begin position="37"/>
        <end position="48"/>
    </location>
</feature>
<feature type="strand" evidence="14">
    <location>
        <begin position="54"/>
        <end position="56"/>
    </location>
</feature>
<feature type="helix" evidence="14">
    <location>
        <begin position="61"/>
        <end position="71"/>
    </location>
</feature>
<feature type="helix" evidence="14">
    <location>
        <begin position="72"/>
        <end position="74"/>
    </location>
</feature>
<feature type="strand" evidence="14">
    <location>
        <begin position="76"/>
        <end position="80"/>
    </location>
</feature>
<feature type="helix" evidence="14">
    <location>
        <begin position="83"/>
        <end position="86"/>
    </location>
</feature>
<feature type="strand" evidence="14">
    <location>
        <begin position="87"/>
        <end position="89"/>
    </location>
</feature>
<feature type="helix" evidence="14">
    <location>
        <begin position="93"/>
        <end position="104"/>
    </location>
</feature>
<feature type="strand" evidence="14">
    <location>
        <begin position="129"/>
        <end position="135"/>
    </location>
</feature>
<feature type="helix" evidence="14">
    <location>
        <begin position="136"/>
        <end position="141"/>
    </location>
</feature>
<feature type="turn" evidence="14">
    <location>
        <begin position="145"/>
        <end position="147"/>
    </location>
</feature>
<feature type="helix" evidence="14">
    <location>
        <begin position="150"/>
        <end position="159"/>
    </location>
</feature>
<feature type="strand" evidence="14">
    <location>
        <begin position="162"/>
        <end position="165"/>
    </location>
</feature>
<feature type="helix" evidence="14">
    <location>
        <begin position="172"/>
        <end position="178"/>
    </location>
</feature>
<feature type="helix" evidence="14">
    <location>
        <begin position="180"/>
        <end position="184"/>
    </location>
</feature>
<feature type="helix" evidence="14">
    <location>
        <begin position="186"/>
        <end position="188"/>
    </location>
</feature>
<feature type="strand" evidence="14">
    <location>
        <begin position="189"/>
        <end position="192"/>
    </location>
</feature>
<feature type="helix" evidence="14">
    <location>
        <begin position="202"/>
        <end position="210"/>
    </location>
</feature>
<feature type="helix" evidence="14">
    <location>
        <begin position="221"/>
        <end position="229"/>
    </location>
</feature>
<feature type="turn" evidence="15">
    <location>
        <begin position="230"/>
        <end position="233"/>
    </location>
</feature>
<comment type="function">
    <text evidence="1 3 4 5 6">Catalyzes the formation of NAD(+) from nicotinamide mononucleotide (NMN) and ATP (PubMed:16118205, PubMed:17402747, PubMed:26616331). Can also use the deamidated form; nicotinic acid mononucleotide (NaMN) as substrate with the same efficiency. Can use triazofurin monophosphate (TrMP) as substrate. Can also use GTP and ITP as nucleotide donors. Also catalyzes the reverse reaction, i.e. the pyrophosphorolytic cleavage of NAD(+). For the pyrophosphorolytic activity, can use NAD(+), NADH, NaAD, nicotinic acid adenine dinucleotide phosphate (NHD), nicotinamide guanine dinucleotide (NGD) as substrates. Fails to cleave phosphorylated dinucleotides NADP(+), NADPH and NaADP(+). Protects against axonal degeneration following injury (PubMed:16118205, PubMed:17402747). May be involved in the maintenance of axonal integrity (By similarity). Also functions as a stress-response chaperone protein that prevents toxic aggregation of proteins; this function may be independent of its NAD(+) synthesis activity (PubMed:18344983).</text>
</comment>
<comment type="catalytic activity">
    <reaction evidence="3 4 6">
        <text>beta-nicotinamide D-ribonucleotide + ATP + H(+) = diphosphate + NAD(+)</text>
        <dbReference type="Rhea" id="RHEA:21360"/>
        <dbReference type="ChEBI" id="CHEBI:14649"/>
        <dbReference type="ChEBI" id="CHEBI:15378"/>
        <dbReference type="ChEBI" id="CHEBI:30616"/>
        <dbReference type="ChEBI" id="CHEBI:33019"/>
        <dbReference type="ChEBI" id="CHEBI:57540"/>
        <dbReference type="EC" id="2.7.7.1"/>
    </reaction>
    <physiologicalReaction direction="left-to-right" evidence="6 10 11">
        <dbReference type="Rhea" id="RHEA:21361"/>
    </physiologicalReaction>
    <physiologicalReaction direction="right-to-left" evidence="10 11">
        <dbReference type="Rhea" id="RHEA:21362"/>
    </physiologicalReaction>
</comment>
<comment type="catalytic activity">
    <reaction evidence="3 4">
        <text>nicotinate beta-D-ribonucleotide + ATP + H(+) = deamido-NAD(+) + diphosphate</text>
        <dbReference type="Rhea" id="RHEA:22860"/>
        <dbReference type="ChEBI" id="CHEBI:15378"/>
        <dbReference type="ChEBI" id="CHEBI:30616"/>
        <dbReference type="ChEBI" id="CHEBI:33019"/>
        <dbReference type="ChEBI" id="CHEBI:57502"/>
        <dbReference type="ChEBI" id="CHEBI:58437"/>
        <dbReference type="EC" id="2.7.7.18"/>
    </reaction>
    <physiologicalReaction direction="left-to-right" evidence="10 11">
        <dbReference type="Rhea" id="RHEA:22861"/>
    </physiologicalReaction>
    <physiologicalReaction direction="right-to-left" evidence="10 11">
        <dbReference type="Rhea" id="RHEA:22862"/>
    </physiologicalReaction>
</comment>
<comment type="cofactor">
    <cofactor evidence="4">
        <name>Mg(2+)</name>
        <dbReference type="ChEBI" id="CHEBI:18420"/>
    </cofactor>
    <text evidence="4">Divalent metal cations. Mg(2+) confers the highest activity.</text>
</comment>
<comment type="activity regulation">
    <text evidence="4">Activity is strongly inhibited by galotannin. Inhibited by P1-(adenosine-5')-P4-(nicotinic-acid-riboside-5')-tetraphosphate (Nap4AD).</text>
</comment>
<comment type="biophysicochemical properties">
    <kinetics>
        <KM evidence="3 4">209 uM for NMN</KM>
        <KM evidence="3 4">130 uM for NAD(+)</KM>
        <KM evidence="3 4">29 uM for ATP</KM>
        <KM evidence="3 4">390 uM for PPi</KM>
        <KM evidence="3 4">276 uM for GTP</KM>
        <KM evidence="3 4">350 uM for ITP</KM>
        <KM evidence="3 4">111 uM for NaMN</KM>
        <KM evidence="3 4">130 uM for NMNH</KM>
        <KM evidence="3 4">2.01 uM for triazofurin monophosphate</KM>
        <Vmax evidence="3 4">3.6 umol/min/mg enzyme for NAD synthesis</Vmax>
        <Vmax evidence="3 4">12.8 umol/min/mg enzyme for pyrophosphorolytic NAD(+) cleavage</Vmax>
        <Vmax evidence="3 4">2.9 umol/min/mg enzyme for pyrophosphorolytic NADH cleavage</Vmax>
    </kinetics>
</comment>
<comment type="pathway">
    <text evidence="10 11">Cofactor biosynthesis; NAD(+) biosynthesis; NAD(+) from nicotinamide D-ribonucleotide: step 1/1.</text>
</comment>
<comment type="pathway">
    <text evidence="10 11">Cofactor biosynthesis; NAD(+) biosynthesis; deamido-NAD(+) from nicotinate D-ribonucleotide: step 1/1.</text>
</comment>
<comment type="subunit">
    <text evidence="2">Homotetramer.</text>
</comment>
<comment type="subcellular location">
    <subcellularLocation>
        <location evidence="2 3">Mitochondrion</location>
    </subcellularLocation>
</comment>
<comment type="alternative products">
    <event type="alternative splicing"/>
    <isoform>
        <id>Q96T66-1</id>
        <name>1</name>
        <sequence type="displayed"/>
    </isoform>
    <isoform>
        <id>Q96T66-2</id>
        <name>2</name>
        <sequence type="described" ref="VSP_010267"/>
    </isoform>
    <isoform>
        <id>Q96T66-3</id>
        <name>3</name>
        <sequence type="described" ref="VSP_043203"/>
    </isoform>
</comment>
<comment type="tissue specificity">
    <text evidence="2 3">Expressed in lung and spleen with lower levels in placenta and kidney.</text>
</comment>
<comment type="similarity">
    <text evidence="9">Belongs to the eukaryotic NMN adenylyltransferase family.</text>
</comment>
<proteinExistence type="evidence at protein level"/>
<evidence type="ECO:0000250" key="1">
    <source>
        <dbReference type="UniProtKB" id="Q99JR6"/>
    </source>
</evidence>
<evidence type="ECO:0000269" key="2">
    <source>
    </source>
</evidence>
<evidence type="ECO:0000269" key="3">
    <source>
    </source>
</evidence>
<evidence type="ECO:0000269" key="4">
    <source>
    </source>
</evidence>
<evidence type="ECO:0000269" key="5">
    <source>
    </source>
</evidence>
<evidence type="ECO:0000269" key="6">
    <source>
    </source>
</evidence>
<evidence type="ECO:0000303" key="7">
    <source>
    </source>
</evidence>
<evidence type="ECO:0000303" key="8">
    <source>
    </source>
</evidence>
<evidence type="ECO:0000305" key="9"/>
<evidence type="ECO:0000305" key="10">
    <source>
    </source>
</evidence>
<evidence type="ECO:0000305" key="11">
    <source>
    </source>
</evidence>
<evidence type="ECO:0000312" key="12">
    <source>
        <dbReference type="HGNC" id="HGNC:20989"/>
    </source>
</evidence>
<evidence type="ECO:0007744" key="13">
    <source>
        <dbReference type="PDB" id="1NUU"/>
    </source>
</evidence>
<evidence type="ECO:0007829" key="14">
    <source>
        <dbReference type="PDB" id="1NUP"/>
    </source>
</evidence>
<evidence type="ECO:0007829" key="15">
    <source>
        <dbReference type="PDB" id="1NUQ"/>
    </source>
</evidence>
<sequence length="252" mass="28322">MKSRIPVVLLACGSFNPITNMHLRMFEVARDHLHQTGMYQVIQGIISPVNDTYGKKDLAASHHRVAMARLALQTSDWIRVDPWESEQAQWMETVKVLRHHHSKLLRSPPQMEGPDHGKALFSTPAAVPELKLLCGADVLKTFQTPNLWKDAHIQEIVEKFGLVCVGRVGHDPKGYIAESPILRMHQHNIHLAKEPVQNEISATYIRRALGQGQSVKYLIPDAVITYIKDHGLYTKGSTWKGKSTQSTEGKTS</sequence>
<keyword id="KW-0002">3D-structure</keyword>
<keyword id="KW-0025">Alternative splicing</keyword>
<keyword id="KW-0067">ATP-binding</keyword>
<keyword id="KW-0460">Magnesium</keyword>
<keyword id="KW-0496">Mitochondrion</keyword>
<keyword id="KW-0520">NAD</keyword>
<keyword id="KW-0547">Nucleotide-binding</keyword>
<keyword id="KW-0548">Nucleotidyltransferase</keyword>
<keyword id="KW-1267">Proteomics identification</keyword>
<keyword id="KW-0662">Pyridine nucleotide biosynthesis</keyword>
<keyword id="KW-1185">Reference proteome</keyword>
<keyword id="KW-0808">Transferase</keyword>
<name>NMNA3_HUMAN</name>